<organism>
    <name type="scientific">Pectobacterium atrosepticum (strain SCRI 1043 / ATCC BAA-672)</name>
    <name type="common">Erwinia carotovora subsp. atroseptica</name>
    <dbReference type="NCBI Taxonomy" id="218491"/>
    <lineage>
        <taxon>Bacteria</taxon>
        <taxon>Pseudomonadati</taxon>
        <taxon>Pseudomonadota</taxon>
        <taxon>Gammaproteobacteria</taxon>
        <taxon>Enterobacterales</taxon>
        <taxon>Pectobacteriaceae</taxon>
        <taxon>Pectobacterium</taxon>
    </lineage>
</organism>
<evidence type="ECO:0000255" key="1">
    <source>
        <dbReference type="HAMAP-Rule" id="MF_00063"/>
    </source>
</evidence>
<reference key="1">
    <citation type="journal article" date="2004" name="Proc. Natl. Acad. Sci. U.S.A.">
        <title>Genome sequence of the enterobacterial phytopathogen Erwinia carotovora subsp. atroseptica and characterization of virulence factors.</title>
        <authorList>
            <person name="Bell K.S."/>
            <person name="Sebaihia M."/>
            <person name="Pritchard L."/>
            <person name="Holden M.T.G."/>
            <person name="Hyman L.J."/>
            <person name="Holeva M.C."/>
            <person name="Thomson N.R."/>
            <person name="Bentley S.D."/>
            <person name="Churcher L.J.C."/>
            <person name="Mungall K."/>
            <person name="Atkin R."/>
            <person name="Bason N."/>
            <person name="Brooks K."/>
            <person name="Chillingworth T."/>
            <person name="Clark K."/>
            <person name="Doggett J."/>
            <person name="Fraser A."/>
            <person name="Hance Z."/>
            <person name="Hauser H."/>
            <person name="Jagels K."/>
            <person name="Moule S."/>
            <person name="Norbertczak H."/>
            <person name="Ormond D."/>
            <person name="Price C."/>
            <person name="Quail M.A."/>
            <person name="Sanders M."/>
            <person name="Walker D."/>
            <person name="Whitehead S."/>
            <person name="Salmond G.P.C."/>
            <person name="Birch P.R.J."/>
            <person name="Parkhill J."/>
            <person name="Toth I.K."/>
        </authorList>
    </citation>
    <scope>NUCLEOTIDE SEQUENCE [LARGE SCALE GENOMIC DNA]</scope>
    <source>
        <strain>SCRI 1043 / ATCC BAA-672</strain>
    </source>
</reference>
<feature type="chain" id="PRO_1000008925" description="Phosphoadenosine 5'-phosphosulfate reductase">
    <location>
        <begin position="1"/>
        <end position="244"/>
    </location>
</feature>
<feature type="active site" description="Nucleophile; cysteine thiosulfonate intermediate" evidence="1">
    <location>
        <position position="239"/>
    </location>
</feature>
<gene>
    <name evidence="1" type="primary">cysH</name>
    <name type="ordered locus">ECA3545</name>
</gene>
<name>CYSH_PECAS</name>
<proteinExistence type="inferred from homology"/>
<comment type="function">
    <text evidence="1">Catalyzes the formation of sulfite from phosphoadenosine 5'-phosphosulfate (PAPS) using thioredoxin as an electron donor.</text>
</comment>
<comment type="catalytic activity">
    <reaction evidence="1">
        <text>[thioredoxin]-disulfide + sulfite + adenosine 3',5'-bisphosphate + 2 H(+) = [thioredoxin]-dithiol + 3'-phosphoadenylyl sulfate</text>
        <dbReference type="Rhea" id="RHEA:11724"/>
        <dbReference type="Rhea" id="RHEA-COMP:10698"/>
        <dbReference type="Rhea" id="RHEA-COMP:10700"/>
        <dbReference type="ChEBI" id="CHEBI:15378"/>
        <dbReference type="ChEBI" id="CHEBI:17359"/>
        <dbReference type="ChEBI" id="CHEBI:29950"/>
        <dbReference type="ChEBI" id="CHEBI:50058"/>
        <dbReference type="ChEBI" id="CHEBI:58339"/>
        <dbReference type="ChEBI" id="CHEBI:58343"/>
        <dbReference type="EC" id="1.8.4.8"/>
    </reaction>
</comment>
<comment type="pathway">
    <text evidence="1">Sulfur metabolism; hydrogen sulfide biosynthesis; sulfite from sulfate: step 3/3.</text>
</comment>
<comment type="subcellular location">
    <subcellularLocation>
        <location evidence="1">Cytoplasm</location>
    </subcellularLocation>
</comment>
<comment type="similarity">
    <text evidence="1">Belongs to the PAPS reductase family. CysH subfamily.</text>
</comment>
<keyword id="KW-0963">Cytoplasm</keyword>
<keyword id="KW-0560">Oxidoreductase</keyword>
<keyword id="KW-1185">Reference proteome</keyword>
<accession>Q6D1A3</accession>
<sequence>MAEFNLEALNALPKDEQVAALAAVNGQLEQLSAQERVSWALENLPGDFVLSSSFGIQAAISLHLVTQQRPDIPVILTDTGYLFPETYQFIDALTEQLKLNLHVYRAAESPAWQESRYGKLWDQGVEGIERYNLLNKVEPMNRALSELNAGTWFAGLRREQSGSRGELPVLAIQRGVFKFLPIIDWDNRTVYQYLKENGLSYHPLWDQGYLSVGDTHTTRKWEPGMSEEETRFFGLKRECGLHEG</sequence>
<dbReference type="EC" id="1.8.4.8" evidence="1"/>
<dbReference type="EMBL" id="BX950851">
    <property type="protein sequence ID" value="CAG76443.1"/>
    <property type="molecule type" value="Genomic_DNA"/>
</dbReference>
<dbReference type="RefSeq" id="WP_011095048.1">
    <property type="nucleotide sequence ID" value="NC_004547.2"/>
</dbReference>
<dbReference type="SMR" id="Q6D1A3"/>
<dbReference type="STRING" id="218491.ECA3545"/>
<dbReference type="KEGG" id="eca:ECA3545"/>
<dbReference type="PATRIC" id="fig|218491.5.peg.3592"/>
<dbReference type="eggNOG" id="COG0175">
    <property type="taxonomic scope" value="Bacteria"/>
</dbReference>
<dbReference type="HOGENOM" id="CLU_044089_3_0_6"/>
<dbReference type="OrthoDB" id="9794018at2"/>
<dbReference type="UniPathway" id="UPA00140">
    <property type="reaction ID" value="UER00206"/>
</dbReference>
<dbReference type="Proteomes" id="UP000007966">
    <property type="component" value="Chromosome"/>
</dbReference>
<dbReference type="GO" id="GO:0005737">
    <property type="term" value="C:cytoplasm"/>
    <property type="evidence" value="ECO:0007669"/>
    <property type="project" value="UniProtKB-SubCell"/>
</dbReference>
<dbReference type="GO" id="GO:0004604">
    <property type="term" value="F:phosphoadenylyl-sulfate reductase (thioredoxin) activity"/>
    <property type="evidence" value="ECO:0007669"/>
    <property type="project" value="UniProtKB-UniRule"/>
</dbReference>
<dbReference type="GO" id="GO:0070814">
    <property type="term" value="P:hydrogen sulfide biosynthetic process"/>
    <property type="evidence" value="ECO:0007669"/>
    <property type="project" value="UniProtKB-UniRule"/>
</dbReference>
<dbReference type="GO" id="GO:0019379">
    <property type="term" value="P:sulfate assimilation, phosphoadenylyl sulfate reduction by phosphoadenylyl-sulfate reductase (thioredoxin)"/>
    <property type="evidence" value="ECO:0007669"/>
    <property type="project" value="UniProtKB-UniRule"/>
</dbReference>
<dbReference type="CDD" id="cd23945">
    <property type="entry name" value="PAPS_reductase"/>
    <property type="match status" value="1"/>
</dbReference>
<dbReference type="FunFam" id="3.40.50.620:FF:000043">
    <property type="entry name" value="Phosphoadenosine phosphosulfate reductase"/>
    <property type="match status" value="1"/>
</dbReference>
<dbReference type="Gene3D" id="3.40.50.620">
    <property type="entry name" value="HUPs"/>
    <property type="match status" value="1"/>
</dbReference>
<dbReference type="HAMAP" id="MF_00063">
    <property type="entry name" value="CysH"/>
    <property type="match status" value="1"/>
</dbReference>
<dbReference type="InterPro" id="IPR004511">
    <property type="entry name" value="PAPS/APS_Rdtase"/>
</dbReference>
<dbReference type="InterPro" id="IPR002500">
    <property type="entry name" value="PAPS_reduct_dom"/>
</dbReference>
<dbReference type="InterPro" id="IPR011800">
    <property type="entry name" value="PAPS_reductase_CysH"/>
</dbReference>
<dbReference type="InterPro" id="IPR014729">
    <property type="entry name" value="Rossmann-like_a/b/a_fold"/>
</dbReference>
<dbReference type="NCBIfam" id="TIGR00434">
    <property type="entry name" value="cysH"/>
    <property type="match status" value="1"/>
</dbReference>
<dbReference type="NCBIfam" id="TIGR02057">
    <property type="entry name" value="PAPS_reductase"/>
    <property type="match status" value="1"/>
</dbReference>
<dbReference type="NCBIfam" id="NF002537">
    <property type="entry name" value="PRK02090.1"/>
    <property type="match status" value="1"/>
</dbReference>
<dbReference type="PANTHER" id="PTHR46509">
    <property type="entry name" value="PHOSPHOADENOSINE PHOSPHOSULFATE REDUCTASE"/>
    <property type="match status" value="1"/>
</dbReference>
<dbReference type="PANTHER" id="PTHR46509:SF1">
    <property type="entry name" value="PHOSPHOADENOSINE PHOSPHOSULFATE REDUCTASE"/>
    <property type="match status" value="1"/>
</dbReference>
<dbReference type="Pfam" id="PF01507">
    <property type="entry name" value="PAPS_reduct"/>
    <property type="match status" value="1"/>
</dbReference>
<dbReference type="PIRSF" id="PIRSF000857">
    <property type="entry name" value="PAPS_reductase"/>
    <property type="match status" value="1"/>
</dbReference>
<dbReference type="SUPFAM" id="SSF52402">
    <property type="entry name" value="Adenine nucleotide alpha hydrolases-like"/>
    <property type="match status" value="1"/>
</dbReference>
<protein>
    <recommendedName>
        <fullName evidence="1">Phosphoadenosine 5'-phosphosulfate reductase</fullName>
        <shortName evidence="1">PAPS reductase</shortName>
        <ecNumber evidence="1">1.8.4.8</ecNumber>
    </recommendedName>
    <alternativeName>
        <fullName evidence="1">3'-phosphoadenylylsulfate reductase</fullName>
    </alternativeName>
    <alternativeName>
        <fullName evidence="1">PAPS reductase, thioredoxin dependent</fullName>
    </alternativeName>
    <alternativeName>
        <fullName evidence="1">PAPS sulfotransferase</fullName>
    </alternativeName>
    <alternativeName>
        <fullName evidence="1">PAdoPS reductase</fullName>
    </alternativeName>
</protein>